<reference key="1">
    <citation type="submission" date="2008-10" db="EMBL/GenBank/DDBJ databases">
        <title>Genome sequence of Ureaplasma urealyticum serovar 10 ATCC-33699.</title>
        <authorList>
            <person name="Shrivastava S."/>
            <person name="Methe B.A."/>
            <person name="Glass J."/>
            <person name="White K."/>
            <person name="Duffy L.B."/>
        </authorList>
    </citation>
    <scope>NUCLEOTIDE SEQUENCE [LARGE SCALE GENOMIC DNA]</scope>
    <source>
        <strain>ATCC 33699 / Western</strain>
    </source>
</reference>
<accession>B5ZCB8</accession>
<sequence length="118" mass="13792">MANFISLKRNEDILNIIKKQQKIHSNHIVVYFCETNLKKVRLAISISKKKFKLATQRNRIRRLIKAWFIAANVLVESYDIVVLVKPSFIDGSFVLNCDNIKKILQTIISKHKQNKINK</sequence>
<evidence type="ECO:0000255" key="1">
    <source>
        <dbReference type="HAMAP-Rule" id="MF_00227"/>
    </source>
</evidence>
<protein>
    <recommendedName>
        <fullName evidence="1">Ribonuclease P protein component</fullName>
        <shortName evidence="1">RNase P protein</shortName>
        <shortName evidence="1">RNaseP protein</shortName>
        <ecNumber evidence="1">3.1.26.5</ecNumber>
    </recommendedName>
    <alternativeName>
        <fullName evidence="1">Protein C5</fullName>
    </alternativeName>
</protein>
<organism>
    <name type="scientific">Ureaplasma urealyticum serovar 10 (strain ATCC 33699 / Western)</name>
    <dbReference type="NCBI Taxonomy" id="565575"/>
    <lineage>
        <taxon>Bacteria</taxon>
        <taxon>Bacillati</taxon>
        <taxon>Mycoplasmatota</taxon>
        <taxon>Mycoplasmoidales</taxon>
        <taxon>Mycoplasmoidaceae</taxon>
        <taxon>Ureaplasma</taxon>
    </lineage>
</organism>
<proteinExistence type="inferred from homology"/>
<name>RNPA_UREU1</name>
<keyword id="KW-0255">Endonuclease</keyword>
<keyword id="KW-0378">Hydrolase</keyword>
<keyword id="KW-0540">Nuclease</keyword>
<keyword id="KW-0694">RNA-binding</keyword>
<keyword id="KW-0819">tRNA processing</keyword>
<comment type="function">
    <text evidence="1">RNaseP catalyzes the removal of the 5'-leader sequence from pre-tRNA to produce the mature 5'-terminus. It can also cleave other RNA substrates such as 4.5S RNA. The protein component plays an auxiliary but essential role in vivo by binding to the 5'-leader sequence and broadening the substrate specificity of the ribozyme.</text>
</comment>
<comment type="catalytic activity">
    <reaction evidence="1">
        <text>Endonucleolytic cleavage of RNA, removing 5'-extranucleotides from tRNA precursor.</text>
        <dbReference type="EC" id="3.1.26.5"/>
    </reaction>
</comment>
<comment type="subunit">
    <text evidence="1">Consists of a catalytic RNA component (M1 or rnpB) and a protein subunit.</text>
</comment>
<comment type="similarity">
    <text evidence="1">Belongs to the RnpA family.</text>
</comment>
<feature type="chain" id="PRO_1000100406" description="Ribonuclease P protein component">
    <location>
        <begin position="1"/>
        <end position="118"/>
    </location>
</feature>
<dbReference type="EC" id="3.1.26.5" evidence="1"/>
<dbReference type="EMBL" id="CP001184">
    <property type="protein sequence ID" value="ACI60017.1"/>
    <property type="molecule type" value="Genomic_DNA"/>
</dbReference>
<dbReference type="RefSeq" id="WP_004025778.1">
    <property type="nucleotide sequence ID" value="NC_011374.1"/>
</dbReference>
<dbReference type="SMR" id="B5ZCB8"/>
<dbReference type="STRING" id="565575.UUR10_0708"/>
<dbReference type="GeneID" id="93849159"/>
<dbReference type="KEGG" id="uue:UUR10_0708"/>
<dbReference type="eggNOG" id="COG0594">
    <property type="taxonomic scope" value="Bacteria"/>
</dbReference>
<dbReference type="HOGENOM" id="CLU_117179_9_4_14"/>
<dbReference type="OrthoDB" id="9796422at2"/>
<dbReference type="Proteomes" id="UP000002018">
    <property type="component" value="Chromosome"/>
</dbReference>
<dbReference type="GO" id="GO:0030677">
    <property type="term" value="C:ribonuclease P complex"/>
    <property type="evidence" value="ECO:0007669"/>
    <property type="project" value="TreeGrafter"/>
</dbReference>
<dbReference type="GO" id="GO:0042781">
    <property type="term" value="F:3'-tRNA processing endoribonuclease activity"/>
    <property type="evidence" value="ECO:0007669"/>
    <property type="project" value="TreeGrafter"/>
</dbReference>
<dbReference type="GO" id="GO:0004526">
    <property type="term" value="F:ribonuclease P activity"/>
    <property type="evidence" value="ECO:0007669"/>
    <property type="project" value="UniProtKB-UniRule"/>
</dbReference>
<dbReference type="GO" id="GO:0000049">
    <property type="term" value="F:tRNA binding"/>
    <property type="evidence" value="ECO:0007669"/>
    <property type="project" value="UniProtKB-UniRule"/>
</dbReference>
<dbReference type="GO" id="GO:0001682">
    <property type="term" value="P:tRNA 5'-leader removal"/>
    <property type="evidence" value="ECO:0007669"/>
    <property type="project" value="UniProtKB-UniRule"/>
</dbReference>
<dbReference type="Gene3D" id="3.30.230.10">
    <property type="match status" value="1"/>
</dbReference>
<dbReference type="HAMAP" id="MF_00227">
    <property type="entry name" value="RNase_P"/>
    <property type="match status" value="1"/>
</dbReference>
<dbReference type="InterPro" id="IPR020568">
    <property type="entry name" value="Ribosomal_Su5_D2-typ_SF"/>
</dbReference>
<dbReference type="InterPro" id="IPR014721">
    <property type="entry name" value="Ribsml_uS5_D2-typ_fold_subgr"/>
</dbReference>
<dbReference type="InterPro" id="IPR000100">
    <property type="entry name" value="RNase_P"/>
</dbReference>
<dbReference type="InterPro" id="IPR020539">
    <property type="entry name" value="RNase_P_CS"/>
</dbReference>
<dbReference type="NCBIfam" id="TIGR00188">
    <property type="entry name" value="rnpA"/>
    <property type="match status" value="1"/>
</dbReference>
<dbReference type="PANTHER" id="PTHR33992">
    <property type="entry name" value="RIBONUCLEASE P PROTEIN COMPONENT"/>
    <property type="match status" value="1"/>
</dbReference>
<dbReference type="PANTHER" id="PTHR33992:SF1">
    <property type="entry name" value="RIBONUCLEASE P PROTEIN COMPONENT"/>
    <property type="match status" value="1"/>
</dbReference>
<dbReference type="Pfam" id="PF00825">
    <property type="entry name" value="Ribonuclease_P"/>
    <property type="match status" value="1"/>
</dbReference>
<dbReference type="SUPFAM" id="SSF54211">
    <property type="entry name" value="Ribosomal protein S5 domain 2-like"/>
    <property type="match status" value="1"/>
</dbReference>
<dbReference type="PROSITE" id="PS00648">
    <property type="entry name" value="RIBONUCLEASE_P"/>
    <property type="match status" value="1"/>
</dbReference>
<gene>
    <name evidence="1" type="primary">rnpA</name>
    <name type="ordered locus">UUR10_0708</name>
</gene>